<comment type="function">
    <text evidence="1">Involved in unsaturated fatty acids biosynthesis. Catalyzes the dehydration of short chain beta-hydroxyacyl-ACPs and long chain saturated and unsaturated beta-hydroxyacyl-ACPs.</text>
</comment>
<comment type="catalytic activity">
    <reaction evidence="1">
        <text>a (3R)-hydroxyacyl-[ACP] = a (2E)-enoyl-[ACP] + H2O</text>
        <dbReference type="Rhea" id="RHEA:13097"/>
        <dbReference type="Rhea" id="RHEA-COMP:9925"/>
        <dbReference type="Rhea" id="RHEA-COMP:9945"/>
        <dbReference type="ChEBI" id="CHEBI:15377"/>
        <dbReference type="ChEBI" id="CHEBI:78784"/>
        <dbReference type="ChEBI" id="CHEBI:78827"/>
        <dbReference type="EC" id="4.2.1.59"/>
    </reaction>
</comment>
<comment type="subcellular location">
    <subcellularLocation>
        <location evidence="1">Cytoplasm</location>
    </subcellularLocation>
</comment>
<comment type="similarity">
    <text evidence="1">Belongs to the thioester dehydratase family. FabZ subfamily.</text>
</comment>
<comment type="sequence caution" evidence="2">
    <conflict type="erroneous initiation">
        <sequence resource="EMBL-CDS" id="ABL02307"/>
    </conflict>
</comment>
<proteinExistence type="inferred from homology"/>
<keyword id="KW-0963">Cytoplasm</keyword>
<keyword id="KW-0441">Lipid A biosynthesis</keyword>
<keyword id="KW-0444">Lipid biosynthesis</keyword>
<keyword id="KW-0443">Lipid metabolism</keyword>
<keyword id="KW-0456">Lyase</keyword>
<protein>
    <recommendedName>
        <fullName evidence="1">3-hydroxyacyl-[acyl-carrier-protein] dehydratase FabZ</fullName>
        <ecNumber evidence="1">4.2.1.59</ecNumber>
    </recommendedName>
    <alternativeName>
        <fullName evidence="1">(3R)-hydroxymyristoyl-[acyl-carrier-protein] dehydratase</fullName>
        <shortName evidence="1">(3R)-hydroxymyristoyl-ACP dehydrase</shortName>
    </alternativeName>
    <alternativeName>
        <fullName evidence="1">Beta-hydroxyacyl-ACP dehydratase</fullName>
    </alternativeName>
</protein>
<organism>
    <name type="scientific">Ruthia magnifica subsp. Calyptogena magnifica</name>
    <dbReference type="NCBI Taxonomy" id="413404"/>
    <lineage>
        <taxon>Bacteria</taxon>
        <taxon>Pseudomonadati</taxon>
        <taxon>Pseudomonadota</taxon>
        <taxon>Gammaproteobacteria</taxon>
        <taxon>Candidatus Pseudothioglobaceae</taxon>
        <taxon>Candidatus Ruthturnera</taxon>
    </lineage>
</organism>
<reference key="1">
    <citation type="journal article" date="2007" name="Science">
        <title>The Calyptogena magnifica chemoautotrophic symbiont genome.</title>
        <authorList>
            <person name="Newton I.L.G."/>
            <person name="Woyke T."/>
            <person name="Auchtung T.A."/>
            <person name="Dilly G.F."/>
            <person name="Dutton R.J."/>
            <person name="Fisher M.C."/>
            <person name="Fontanez K.M."/>
            <person name="Lau E."/>
            <person name="Stewart F.J."/>
            <person name="Richardson P.M."/>
            <person name="Barry K.W."/>
            <person name="Saunders E."/>
            <person name="Detter J.C."/>
            <person name="Wu D."/>
            <person name="Eisen J.A."/>
            <person name="Cavanaugh C.M."/>
        </authorList>
    </citation>
    <scope>NUCLEOTIDE SEQUENCE [LARGE SCALE GENOMIC DNA]</scope>
</reference>
<evidence type="ECO:0000255" key="1">
    <source>
        <dbReference type="HAMAP-Rule" id="MF_00406"/>
    </source>
</evidence>
<evidence type="ECO:0000305" key="2"/>
<sequence length="145" mass="16347">MSIQDVKNYLPHRYPFLLIDRVLELEIGKSIVALKNVTFNEPQFTGHFPEQPIMPGVMIVEALAQATGILAFKSEAGKPIDGQIYMLVGIDKVRFKRMVEPGDQLRLEVEVITIKRGIWKFKCKATVDNQIITSAELMCTQRTAG</sequence>
<dbReference type="EC" id="4.2.1.59" evidence="1"/>
<dbReference type="EMBL" id="CP000488">
    <property type="protein sequence ID" value="ABL02307.1"/>
    <property type="status" value="ALT_INIT"/>
    <property type="molecule type" value="Genomic_DNA"/>
</dbReference>
<dbReference type="SMR" id="A1AWK0"/>
<dbReference type="STRING" id="413404.Rmag_0555"/>
<dbReference type="KEGG" id="rma:Rmag_0555"/>
<dbReference type="eggNOG" id="COG0764">
    <property type="taxonomic scope" value="Bacteria"/>
</dbReference>
<dbReference type="HOGENOM" id="CLU_078912_1_0_6"/>
<dbReference type="Proteomes" id="UP000002587">
    <property type="component" value="Chromosome"/>
</dbReference>
<dbReference type="GO" id="GO:0005737">
    <property type="term" value="C:cytoplasm"/>
    <property type="evidence" value="ECO:0007669"/>
    <property type="project" value="UniProtKB-SubCell"/>
</dbReference>
<dbReference type="GO" id="GO:0016020">
    <property type="term" value="C:membrane"/>
    <property type="evidence" value="ECO:0007669"/>
    <property type="project" value="GOC"/>
</dbReference>
<dbReference type="GO" id="GO:0019171">
    <property type="term" value="F:(3R)-hydroxyacyl-[acyl-carrier-protein] dehydratase activity"/>
    <property type="evidence" value="ECO:0007669"/>
    <property type="project" value="UniProtKB-EC"/>
</dbReference>
<dbReference type="GO" id="GO:0006633">
    <property type="term" value="P:fatty acid biosynthetic process"/>
    <property type="evidence" value="ECO:0007669"/>
    <property type="project" value="UniProtKB-UniRule"/>
</dbReference>
<dbReference type="GO" id="GO:0009245">
    <property type="term" value="P:lipid A biosynthetic process"/>
    <property type="evidence" value="ECO:0007669"/>
    <property type="project" value="UniProtKB-UniRule"/>
</dbReference>
<dbReference type="CDD" id="cd01288">
    <property type="entry name" value="FabZ"/>
    <property type="match status" value="1"/>
</dbReference>
<dbReference type="FunFam" id="3.10.129.10:FF:000001">
    <property type="entry name" value="3-hydroxyacyl-[acyl-carrier-protein] dehydratase FabZ"/>
    <property type="match status" value="1"/>
</dbReference>
<dbReference type="Gene3D" id="3.10.129.10">
    <property type="entry name" value="Hotdog Thioesterase"/>
    <property type="match status" value="1"/>
</dbReference>
<dbReference type="HAMAP" id="MF_00406">
    <property type="entry name" value="FabZ"/>
    <property type="match status" value="1"/>
</dbReference>
<dbReference type="InterPro" id="IPR013114">
    <property type="entry name" value="FabA_FabZ"/>
</dbReference>
<dbReference type="InterPro" id="IPR010084">
    <property type="entry name" value="FabZ"/>
</dbReference>
<dbReference type="InterPro" id="IPR029069">
    <property type="entry name" value="HotDog_dom_sf"/>
</dbReference>
<dbReference type="NCBIfam" id="TIGR01750">
    <property type="entry name" value="fabZ"/>
    <property type="match status" value="1"/>
</dbReference>
<dbReference type="NCBIfam" id="NF000582">
    <property type="entry name" value="PRK00006.1"/>
    <property type="match status" value="1"/>
</dbReference>
<dbReference type="PANTHER" id="PTHR30272">
    <property type="entry name" value="3-HYDROXYACYL-[ACYL-CARRIER-PROTEIN] DEHYDRATASE"/>
    <property type="match status" value="1"/>
</dbReference>
<dbReference type="PANTHER" id="PTHR30272:SF1">
    <property type="entry name" value="3-HYDROXYACYL-[ACYL-CARRIER-PROTEIN] DEHYDRATASE"/>
    <property type="match status" value="1"/>
</dbReference>
<dbReference type="Pfam" id="PF07977">
    <property type="entry name" value="FabA"/>
    <property type="match status" value="1"/>
</dbReference>
<dbReference type="SUPFAM" id="SSF54637">
    <property type="entry name" value="Thioesterase/thiol ester dehydrase-isomerase"/>
    <property type="match status" value="1"/>
</dbReference>
<feature type="chain" id="PRO_0000340799" description="3-hydroxyacyl-[acyl-carrier-protein] dehydratase FabZ">
    <location>
        <begin position="1"/>
        <end position="145"/>
    </location>
</feature>
<feature type="active site" evidence="1">
    <location>
        <position position="47"/>
    </location>
</feature>
<name>FABZ_RUTMC</name>
<accession>A1AWK0</accession>
<gene>
    <name evidence="1" type="primary">fabZ</name>
    <name type="ordered locus">Rmag_0555</name>
</gene>